<proteinExistence type="inferred from homology"/>
<name>LDH1_STAA9</name>
<keyword id="KW-0963">Cytoplasm</keyword>
<keyword id="KW-0520">NAD</keyword>
<keyword id="KW-0560">Oxidoreductase</keyword>
<keyword id="KW-0597">Phosphoprotein</keyword>
<keyword id="KW-0346">Stress response</keyword>
<comment type="function">
    <text evidence="1 2">Catalyzes the conversion of lactate to pyruvate (Potential). Appears to be the primary factor that allows S.aureus growth during nitrosative stress in both aerobically and anaerobically cultured cells (By similarity).</text>
</comment>
<comment type="catalytic activity">
    <reaction evidence="2">
        <text>(S)-lactate + NAD(+) = pyruvate + NADH + H(+)</text>
        <dbReference type="Rhea" id="RHEA:23444"/>
        <dbReference type="ChEBI" id="CHEBI:15361"/>
        <dbReference type="ChEBI" id="CHEBI:15378"/>
        <dbReference type="ChEBI" id="CHEBI:16651"/>
        <dbReference type="ChEBI" id="CHEBI:57540"/>
        <dbReference type="ChEBI" id="CHEBI:57945"/>
        <dbReference type="EC" id="1.1.1.27"/>
    </reaction>
</comment>
<comment type="pathway">
    <text evidence="2">Fermentation; pyruvate fermentation to lactate; (S)-lactate from pyruvate: step 1/1.</text>
</comment>
<comment type="subunit">
    <text evidence="2">Homotetramer.</text>
</comment>
<comment type="subcellular location">
    <subcellularLocation>
        <location evidence="2">Cytoplasm</location>
    </subcellularLocation>
</comment>
<comment type="similarity">
    <text evidence="2 3">Belongs to the LDH/MDH superfamily. LDH family.</text>
</comment>
<sequence>MNKFKGNKVVLIGNGAVGSSYAFSLVNQSIVDELVIIDLDTEKVRGDVMDLKHATPYSPTTVRVKAGEYSDCHDADLVVICAGAAQKPGETRLDLVSKNLKIFKSIVGEVMASKFDGIFLVATNPVDILAYATWKFSGLPKERVIGSGTILDSARFRLLLSEAFDVAPRSVDAQIIGEHGDTELPVWSHANIAGQPLKTLLEQRPEGKAQIEQIFVQTRDAAYDIIQAKGATYYGVAMGLARITEAIFRNEDAVLTVSALLEGEYDEEDVYIGVPAVINRNGIRNVVEIPLNDEEQSKFAHSAKTLKDIMAEAEELK</sequence>
<evidence type="ECO:0000250" key="1">
    <source>
        <dbReference type="UniProtKB" id="Q5HJD7"/>
    </source>
</evidence>
<evidence type="ECO:0000255" key="2">
    <source>
        <dbReference type="HAMAP-Rule" id="MF_00488"/>
    </source>
</evidence>
<evidence type="ECO:0000305" key="3"/>
<accession>A5IPA9</accession>
<gene>
    <name evidence="2" type="primary">ldh1</name>
    <name type="ordered locus">SaurJH9_0225</name>
</gene>
<organism>
    <name type="scientific">Staphylococcus aureus (strain JH9)</name>
    <dbReference type="NCBI Taxonomy" id="359786"/>
    <lineage>
        <taxon>Bacteria</taxon>
        <taxon>Bacillati</taxon>
        <taxon>Bacillota</taxon>
        <taxon>Bacilli</taxon>
        <taxon>Bacillales</taxon>
        <taxon>Staphylococcaceae</taxon>
        <taxon>Staphylococcus</taxon>
    </lineage>
</organism>
<protein>
    <recommendedName>
        <fullName evidence="2">L-lactate dehydrogenase 1</fullName>
        <shortName evidence="2">L-LDH 1</shortName>
        <ecNumber evidence="2">1.1.1.27</ecNumber>
    </recommendedName>
</protein>
<feature type="chain" id="PRO_0000343836" description="L-lactate dehydrogenase 1">
    <location>
        <begin position="1"/>
        <end position="317"/>
    </location>
</feature>
<feature type="active site" description="Proton acceptor" evidence="2">
    <location>
        <position position="179"/>
    </location>
</feature>
<feature type="binding site" evidence="2">
    <location>
        <position position="17"/>
    </location>
    <ligand>
        <name>NAD(+)</name>
        <dbReference type="ChEBI" id="CHEBI:57540"/>
    </ligand>
</feature>
<feature type="binding site" evidence="2">
    <location>
        <position position="38"/>
    </location>
    <ligand>
        <name>NAD(+)</name>
        <dbReference type="ChEBI" id="CHEBI:57540"/>
    </ligand>
</feature>
<feature type="binding site" evidence="2">
    <location>
        <position position="43"/>
    </location>
    <ligand>
        <name>NAD(+)</name>
        <dbReference type="ChEBI" id="CHEBI:57540"/>
    </ligand>
</feature>
<feature type="binding site" evidence="2">
    <location>
        <position position="69"/>
    </location>
    <ligand>
        <name>NAD(+)</name>
        <dbReference type="ChEBI" id="CHEBI:57540"/>
    </ligand>
</feature>
<feature type="binding site" evidence="2">
    <location>
        <begin position="83"/>
        <end position="84"/>
    </location>
    <ligand>
        <name>NAD(+)</name>
        <dbReference type="ChEBI" id="CHEBI:57540"/>
    </ligand>
</feature>
<feature type="binding site" evidence="2">
    <location>
        <position position="86"/>
    </location>
    <ligand>
        <name>substrate</name>
    </ligand>
</feature>
<feature type="binding site" evidence="2">
    <location>
        <position position="92"/>
    </location>
    <ligand>
        <name>substrate</name>
    </ligand>
</feature>
<feature type="binding site" evidence="2">
    <location>
        <position position="105"/>
    </location>
    <ligand>
        <name>NAD(+)</name>
        <dbReference type="ChEBI" id="CHEBI:57540"/>
    </ligand>
</feature>
<feature type="binding site" evidence="2">
    <location>
        <begin position="122"/>
        <end position="124"/>
    </location>
    <ligand>
        <name>NAD(+)</name>
        <dbReference type="ChEBI" id="CHEBI:57540"/>
    </ligand>
</feature>
<feature type="binding site" evidence="2">
    <location>
        <begin position="124"/>
        <end position="127"/>
    </location>
    <ligand>
        <name>substrate</name>
    </ligand>
</feature>
<feature type="binding site" evidence="2">
    <location>
        <position position="147"/>
    </location>
    <ligand>
        <name>NAD(+)</name>
        <dbReference type="ChEBI" id="CHEBI:57540"/>
    </ligand>
</feature>
<feature type="binding site" evidence="2">
    <location>
        <begin position="152"/>
        <end position="155"/>
    </location>
    <ligand>
        <name>substrate</name>
    </ligand>
</feature>
<feature type="binding site" evidence="2">
    <location>
        <position position="232"/>
    </location>
    <ligand>
        <name>substrate</name>
    </ligand>
</feature>
<feature type="modified residue" description="Phosphotyrosine" evidence="2">
    <location>
        <position position="223"/>
    </location>
</feature>
<reference key="1">
    <citation type="submission" date="2007-05" db="EMBL/GenBank/DDBJ databases">
        <title>Complete sequence of chromosome of Staphylococcus aureus subsp. aureus JH9.</title>
        <authorList>
            <consortium name="US DOE Joint Genome Institute"/>
            <person name="Copeland A."/>
            <person name="Lucas S."/>
            <person name="Lapidus A."/>
            <person name="Barry K."/>
            <person name="Detter J.C."/>
            <person name="Glavina del Rio T."/>
            <person name="Hammon N."/>
            <person name="Israni S."/>
            <person name="Pitluck S."/>
            <person name="Chain P."/>
            <person name="Malfatti S."/>
            <person name="Shin M."/>
            <person name="Vergez L."/>
            <person name="Schmutz J."/>
            <person name="Larimer F."/>
            <person name="Land M."/>
            <person name="Hauser L."/>
            <person name="Kyrpides N."/>
            <person name="Kim E."/>
            <person name="Tomasz A."/>
            <person name="Richardson P."/>
        </authorList>
    </citation>
    <scope>NUCLEOTIDE SEQUENCE [LARGE SCALE GENOMIC DNA]</scope>
    <source>
        <strain>JH9</strain>
    </source>
</reference>
<dbReference type="EC" id="1.1.1.27" evidence="2"/>
<dbReference type="EMBL" id="CP000703">
    <property type="protein sequence ID" value="ABQ48032.1"/>
    <property type="molecule type" value="Genomic_DNA"/>
</dbReference>
<dbReference type="RefSeq" id="WP_001031880.1">
    <property type="nucleotide sequence ID" value="NC_009487.1"/>
</dbReference>
<dbReference type="SMR" id="A5IPA9"/>
<dbReference type="KEGG" id="saj:SaurJH9_0225"/>
<dbReference type="HOGENOM" id="CLU_045401_1_1_9"/>
<dbReference type="UniPathway" id="UPA00554">
    <property type="reaction ID" value="UER00611"/>
</dbReference>
<dbReference type="GO" id="GO:0005737">
    <property type="term" value="C:cytoplasm"/>
    <property type="evidence" value="ECO:0007669"/>
    <property type="project" value="UniProtKB-SubCell"/>
</dbReference>
<dbReference type="GO" id="GO:0004459">
    <property type="term" value="F:L-lactate dehydrogenase activity"/>
    <property type="evidence" value="ECO:0007669"/>
    <property type="project" value="UniProtKB-UniRule"/>
</dbReference>
<dbReference type="GO" id="GO:0006096">
    <property type="term" value="P:glycolytic process"/>
    <property type="evidence" value="ECO:0007669"/>
    <property type="project" value="UniProtKB-UniRule"/>
</dbReference>
<dbReference type="GO" id="GO:0006089">
    <property type="term" value="P:lactate metabolic process"/>
    <property type="evidence" value="ECO:0007669"/>
    <property type="project" value="TreeGrafter"/>
</dbReference>
<dbReference type="CDD" id="cd05291">
    <property type="entry name" value="HicDH_like"/>
    <property type="match status" value="1"/>
</dbReference>
<dbReference type="FunFam" id="3.40.50.720:FF:000018">
    <property type="entry name" value="Malate dehydrogenase"/>
    <property type="match status" value="1"/>
</dbReference>
<dbReference type="Gene3D" id="3.90.110.10">
    <property type="entry name" value="Lactate dehydrogenase/glycoside hydrolase, family 4, C-terminal"/>
    <property type="match status" value="1"/>
</dbReference>
<dbReference type="Gene3D" id="3.40.50.720">
    <property type="entry name" value="NAD(P)-binding Rossmann-like Domain"/>
    <property type="match status" value="1"/>
</dbReference>
<dbReference type="HAMAP" id="MF_00488">
    <property type="entry name" value="Lactate_dehydrog"/>
    <property type="match status" value="1"/>
</dbReference>
<dbReference type="InterPro" id="IPR001557">
    <property type="entry name" value="L-lactate/malate_DH"/>
</dbReference>
<dbReference type="InterPro" id="IPR011304">
    <property type="entry name" value="L-lactate_DH"/>
</dbReference>
<dbReference type="InterPro" id="IPR018177">
    <property type="entry name" value="L-lactate_DH_AS"/>
</dbReference>
<dbReference type="InterPro" id="IPR022383">
    <property type="entry name" value="Lactate/malate_DH_C"/>
</dbReference>
<dbReference type="InterPro" id="IPR001236">
    <property type="entry name" value="Lactate/malate_DH_N"/>
</dbReference>
<dbReference type="InterPro" id="IPR015955">
    <property type="entry name" value="Lactate_DH/Glyco_Ohase_4_C"/>
</dbReference>
<dbReference type="InterPro" id="IPR036291">
    <property type="entry name" value="NAD(P)-bd_dom_sf"/>
</dbReference>
<dbReference type="NCBIfam" id="TIGR01771">
    <property type="entry name" value="L-LDH-NAD"/>
    <property type="match status" value="1"/>
</dbReference>
<dbReference type="NCBIfam" id="NF000824">
    <property type="entry name" value="PRK00066.1"/>
    <property type="match status" value="1"/>
</dbReference>
<dbReference type="NCBIfam" id="NF004863">
    <property type="entry name" value="PRK06223.1"/>
    <property type="match status" value="1"/>
</dbReference>
<dbReference type="PANTHER" id="PTHR43128">
    <property type="entry name" value="L-2-HYDROXYCARBOXYLATE DEHYDROGENASE (NAD(P)(+))"/>
    <property type="match status" value="1"/>
</dbReference>
<dbReference type="PANTHER" id="PTHR43128:SF16">
    <property type="entry name" value="L-LACTATE DEHYDROGENASE"/>
    <property type="match status" value="1"/>
</dbReference>
<dbReference type="Pfam" id="PF02866">
    <property type="entry name" value="Ldh_1_C"/>
    <property type="match status" value="1"/>
</dbReference>
<dbReference type="Pfam" id="PF00056">
    <property type="entry name" value="Ldh_1_N"/>
    <property type="match status" value="1"/>
</dbReference>
<dbReference type="PIRSF" id="PIRSF000102">
    <property type="entry name" value="Lac_mal_DH"/>
    <property type="match status" value="1"/>
</dbReference>
<dbReference type="PRINTS" id="PR00086">
    <property type="entry name" value="LLDHDRGNASE"/>
</dbReference>
<dbReference type="SUPFAM" id="SSF56327">
    <property type="entry name" value="LDH C-terminal domain-like"/>
    <property type="match status" value="1"/>
</dbReference>
<dbReference type="SUPFAM" id="SSF51735">
    <property type="entry name" value="NAD(P)-binding Rossmann-fold domains"/>
    <property type="match status" value="1"/>
</dbReference>
<dbReference type="PROSITE" id="PS00064">
    <property type="entry name" value="L_LDH"/>
    <property type="match status" value="1"/>
</dbReference>